<gene>
    <name evidence="1" type="primary">cmk</name>
    <name type="ordered locus">ECS88_0938</name>
</gene>
<sequence>MTAIAPVITIDGPSGAGKGTLCKAMAEALQWHLLDSGAIYRVLALAALHHHVDVASEDALVPLASHLDVRFVSTNGNLEVILEGEDVSGEIRTQEVANAASQVAAFPRVREALLRRQRAFRELPGLIADGRDMGTVVFPDAPVKIFLDASSEERAHRRMLQLQEKGFSVNFERLLAEIKERDDRDRNRAVAPLVPAADALVLDSTTLSIEQVIEKALQYARQKLALA</sequence>
<keyword id="KW-0067">ATP-binding</keyword>
<keyword id="KW-0963">Cytoplasm</keyword>
<keyword id="KW-0418">Kinase</keyword>
<keyword id="KW-0547">Nucleotide-binding</keyword>
<keyword id="KW-1185">Reference proteome</keyword>
<keyword id="KW-0808">Transferase</keyword>
<organism>
    <name type="scientific">Escherichia coli O45:K1 (strain S88 / ExPEC)</name>
    <dbReference type="NCBI Taxonomy" id="585035"/>
    <lineage>
        <taxon>Bacteria</taxon>
        <taxon>Pseudomonadati</taxon>
        <taxon>Pseudomonadota</taxon>
        <taxon>Gammaproteobacteria</taxon>
        <taxon>Enterobacterales</taxon>
        <taxon>Enterobacteriaceae</taxon>
        <taxon>Escherichia</taxon>
    </lineage>
</organism>
<comment type="catalytic activity">
    <reaction evidence="1">
        <text>CMP + ATP = CDP + ADP</text>
        <dbReference type="Rhea" id="RHEA:11600"/>
        <dbReference type="ChEBI" id="CHEBI:30616"/>
        <dbReference type="ChEBI" id="CHEBI:58069"/>
        <dbReference type="ChEBI" id="CHEBI:60377"/>
        <dbReference type="ChEBI" id="CHEBI:456216"/>
        <dbReference type="EC" id="2.7.4.25"/>
    </reaction>
</comment>
<comment type="catalytic activity">
    <reaction evidence="1">
        <text>dCMP + ATP = dCDP + ADP</text>
        <dbReference type="Rhea" id="RHEA:25094"/>
        <dbReference type="ChEBI" id="CHEBI:30616"/>
        <dbReference type="ChEBI" id="CHEBI:57566"/>
        <dbReference type="ChEBI" id="CHEBI:58593"/>
        <dbReference type="ChEBI" id="CHEBI:456216"/>
        <dbReference type="EC" id="2.7.4.25"/>
    </reaction>
</comment>
<comment type="subcellular location">
    <subcellularLocation>
        <location evidence="1">Cytoplasm</location>
    </subcellularLocation>
</comment>
<comment type="similarity">
    <text evidence="1">Belongs to the cytidylate kinase family. Type 1 subfamily.</text>
</comment>
<reference key="1">
    <citation type="journal article" date="2009" name="PLoS Genet.">
        <title>Organised genome dynamics in the Escherichia coli species results in highly diverse adaptive paths.</title>
        <authorList>
            <person name="Touchon M."/>
            <person name="Hoede C."/>
            <person name="Tenaillon O."/>
            <person name="Barbe V."/>
            <person name="Baeriswyl S."/>
            <person name="Bidet P."/>
            <person name="Bingen E."/>
            <person name="Bonacorsi S."/>
            <person name="Bouchier C."/>
            <person name="Bouvet O."/>
            <person name="Calteau A."/>
            <person name="Chiapello H."/>
            <person name="Clermont O."/>
            <person name="Cruveiller S."/>
            <person name="Danchin A."/>
            <person name="Diard M."/>
            <person name="Dossat C."/>
            <person name="Karoui M.E."/>
            <person name="Frapy E."/>
            <person name="Garry L."/>
            <person name="Ghigo J.M."/>
            <person name="Gilles A.M."/>
            <person name="Johnson J."/>
            <person name="Le Bouguenec C."/>
            <person name="Lescat M."/>
            <person name="Mangenot S."/>
            <person name="Martinez-Jehanne V."/>
            <person name="Matic I."/>
            <person name="Nassif X."/>
            <person name="Oztas S."/>
            <person name="Petit M.A."/>
            <person name="Pichon C."/>
            <person name="Rouy Z."/>
            <person name="Ruf C.S."/>
            <person name="Schneider D."/>
            <person name="Tourret J."/>
            <person name="Vacherie B."/>
            <person name="Vallenet D."/>
            <person name="Medigue C."/>
            <person name="Rocha E.P.C."/>
            <person name="Denamur E."/>
        </authorList>
    </citation>
    <scope>NUCLEOTIDE SEQUENCE [LARGE SCALE GENOMIC DNA]</scope>
    <source>
        <strain>S88 / ExPEC</strain>
    </source>
</reference>
<evidence type="ECO:0000255" key="1">
    <source>
        <dbReference type="HAMAP-Rule" id="MF_00238"/>
    </source>
</evidence>
<proteinExistence type="inferred from homology"/>
<accession>B7MHL9</accession>
<dbReference type="EC" id="2.7.4.25" evidence="1"/>
<dbReference type="EMBL" id="CU928161">
    <property type="protein sequence ID" value="CAR02270.1"/>
    <property type="molecule type" value="Genomic_DNA"/>
</dbReference>
<dbReference type="RefSeq" id="WP_000125016.1">
    <property type="nucleotide sequence ID" value="NC_011742.1"/>
</dbReference>
<dbReference type="SMR" id="B7MHL9"/>
<dbReference type="GeneID" id="93776507"/>
<dbReference type="KEGG" id="ecz:ECS88_0938"/>
<dbReference type="HOGENOM" id="CLU_079959_0_2_6"/>
<dbReference type="Proteomes" id="UP000000747">
    <property type="component" value="Chromosome"/>
</dbReference>
<dbReference type="GO" id="GO:0005829">
    <property type="term" value="C:cytosol"/>
    <property type="evidence" value="ECO:0007669"/>
    <property type="project" value="TreeGrafter"/>
</dbReference>
<dbReference type="GO" id="GO:0005524">
    <property type="term" value="F:ATP binding"/>
    <property type="evidence" value="ECO:0007669"/>
    <property type="project" value="UniProtKB-UniRule"/>
</dbReference>
<dbReference type="GO" id="GO:0036430">
    <property type="term" value="F:CMP kinase activity"/>
    <property type="evidence" value="ECO:0007669"/>
    <property type="project" value="RHEA"/>
</dbReference>
<dbReference type="GO" id="GO:0036431">
    <property type="term" value="F:dCMP kinase activity"/>
    <property type="evidence" value="ECO:0007669"/>
    <property type="project" value="RHEA"/>
</dbReference>
<dbReference type="GO" id="GO:0015949">
    <property type="term" value="P:nucleobase-containing small molecule interconversion"/>
    <property type="evidence" value="ECO:0007669"/>
    <property type="project" value="TreeGrafter"/>
</dbReference>
<dbReference type="GO" id="GO:0006220">
    <property type="term" value="P:pyrimidine nucleotide metabolic process"/>
    <property type="evidence" value="ECO:0007669"/>
    <property type="project" value="UniProtKB-UniRule"/>
</dbReference>
<dbReference type="CDD" id="cd02020">
    <property type="entry name" value="CMPK"/>
    <property type="match status" value="1"/>
</dbReference>
<dbReference type="FunFam" id="3.40.50.300:FF:000262">
    <property type="entry name" value="Cytidylate kinase"/>
    <property type="match status" value="1"/>
</dbReference>
<dbReference type="Gene3D" id="3.40.50.300">
    <property type="entry name" value="P-loop containing nucleotide triphosphate hydrolases"/>
    <property type="match status" value="1"/>
</dbReference>
<dbReference type="HAMAP" id="MF_00238">
    <property type="entry name" value="Cytidyl_kinase_type1"/>
    <property type="match status" value="1"/>
</dbReference>
<dbReference type="InterPro" id="IPR003136">
    <property type="entry name" value="Cytidylate_kin"/>
</dbReference>
<dbReference type="InterPro" id="IPR011994">
    <property type="entry name" value="Cytidylate_kinase_dom"/>
</dbReference>
<dbReference type="InterPro" id="IPR027417">
    <property type="entry name" value="P-loop_NTPase"/>
</dbReference>
<dbReference type="NCBIfam" id="TIGR00017">
    <property type="entry name" value="cmk"/>
    <property type="match status" value="1"/>
</dbReference>
<dbReference type="PANTHER" id="PTHR21299:SF2">
    <property type="entry name" value="CYTIDYLATE KINASE"/>
    <property type="match status" value="1"/>
</dbReference>
<dbReference type="PANTHER" id="PTHR21299">
    <property type="entry name" value="CYTIDYLATE KINASE/PANTOATE-BETA-ALANINE LIGASE"/>
    <property type="match status" value="1"/>
</dbReference>
<dbReference type="Pfam" id="PF02224">
    <property type="entry name" value="Cytidylate_kin"/>
    <property type="match status" value="1"/>
</dbReference>
<dbReference type="SUPFAM" id="SSF52540">
    <property type="entry name" value="P-loop containing nucleoside triphosphate hydrolases"/>
    <property type="match status" value="1"/>
</dbReference>
<feature type="chain" id="PRO_1000119013" description="Cytidylate kinase">
    <location>
        <begin position="1"/>
        <end position="227"/>
    </location>
</feature>
<feature type="binding site" evidence="1">
    <location>
        <begin position="12"/>
        <end position="20"/>
    </location>
    <ligand>
        <name>ATP</name>
        <dbReference type="ChEBI" id="CHEBI:30616"/>
    </ligand>
</feature>
<name>KCY_ECO45</name>
<protein>
    <recommendedName>
        <fullName evidence="1">Cytidylate kinase</fullName>
        <shortName evidence="1">CK</shortName>
        <ecNumber evidence="1">2.7.4.25</ecNumber>
    </recommendedName>
    <alternativeName>
        <fullName evidence="1">Cytidine monophosphate kinase</fullName>
        <shortName evidence="1">CMP kinase</shortName>
    </alternativeName>
</protein>